<dbReference type="EMBL" id="M96262">
    <property type="status" value="NOT_ANNOTATED_CDS"/>
    <property type="molecule type" value="Genomic_RNA"/>
</dbReference>
<dbReference type="EMBL" id="L04493">
    <property type="status" value="NOT_ANNOTATED_CDS"/>
    <property type="molecule type" value="Genomic_RNA"/>
</dbReference>
<dbReference type="PIR" id="A44281">
    <property type="entry name" value="A44281"/>
</dbReference>
<dbReference type="PIR" id="F45392">
    <property type="entry name" value="F45392"/>
</dbReference>
<dbReference type="SMR" id="P0DJZ4"/>
<dbReference type="Proteomes" id="UP000006687">
    <property type="component" value="Segment"/>
</dbReference>
<dbReference type="GO" id="GO:0020002">
    <property type="term" value="C:host cell plasma membrane"/>
    <property type="evidence" value="ECO:0007669"/>
    <property type="project" value="UniProtKB-SubCell"/>
</dbReference>
<dbReference type="GO" id="GO:0016020">
    <property type="term" value="C:membrane"/>
    <property type="evidence" value="ECO:0007669"/>
    <property type="project" value="UniProtKB-KW"/>
</dbReference>
<dbReference type="GO" id="GO:0044423">
    <property type="term" value="C:virion component"/>
    <property type="evidence" value="ECO:0007669"/>
    <property type="project" value="UniProtKB-KW"/>
</dbReference>
<sequence>MFSQIGAFLDSALLLLVAFFAVYRLVLVLCRWQRRQLDIPIHI</sequence>
<organismHost>
    <name type="scientific">Sus scrofa</name>
    <name type="common">Pig</name>
    <dbReference type="NCBI Taxonomy" id="9823"/>
</organismHost>
<keyword id="KW-0024">Alternative initiation</keyword>
<keyword id="KW-1032">Host cell membrane</keyword>
<keyword id="KW-1043">Host membrane</keyword>
<keyword id="KW-0472">Membrane</keyword>
<keyword id="KW-1185">Reference proteome</keyword>
<keyword id="KW-0812">Transmembrane</keyword>
<keyword id="KW-1133">Transmembrane helix</keyword>
<keyword id="KW-0946">Virion</keyword>
<organism>
    <name type="scientific">Porcine reproductive and respiratory syndrome virus (strain Lelystad)</name>
    <name type="common">PRRSV</name>
    <dbReference type="NCBI Taxonomy" id="11049"/>
    <lineage>
        <taxon>Viruses</taxon>
        <taxon>Riboviria</taxon>
        <taxon>Orthornavirae</taxon>
        <taxon>Pisuviricota</taxon>
        <taxon>Pisoniviricetes</taxon>
        <taxon>Nidovirales</taxon>
        <taxon>Arnidovirineae</taxon>
        <taxon>Arteriviridae</taxon>
        <taxon>Variarterivirinae</taxon>
        <taxon>Betaarterivirus</taxon>
        <taxon>Eurpobartevirus</taxon>
        <taxon>Betaarterivirus suid 1</taxon>
    </lineage>
</organism>
<protein>
    <recommendedName>
        <fullName>Structural protein ORF5a</fullName>
    </recommendedName>
</protein>
<feature type="chain" id="PRO_0000434787" description="Structural protein ORF5a">
    <location>
        <begin position="1"/>
        <end position="43"/>
    </location>
</feature>
<feature type="transmembrane region" description="Helical" evidence="2">
    <location>
        <begin position="2"/>
        <end position="22"/>
    </location>
</feature>
<name>ORF5A_PRRSL</name>
<accession>P0DJZ4</accession>
<proteinExistence type="evidence at protein level"/>
<evidence type="ECO:0000250" key="1">
    <source>
        <dbReference type="UniProtKB" id="P0DJZ5"/>
    </source>
</evidence>
<evidence type="ECO:0000255" key="2"/>
<evidence type="ECO:0000305" key="3"/>
<reference key="1">
    <citation type="journal article" date="1993" name="Virology">
        <title>Lelystad virus, the causative agent of porcine epidemic abortion and respiratory syndrome (PEARS), is related to LDV and EAV.</title>
        <authorList>
            <person name="Meulenberg J.J.M."/>
            <person name="Hulst M.M."/>
            <person name="de Meijer E.J."/>
            <person name="Moonen P.L.J.M."/>
            <person name="den Besten A."/>
            <person name="de Kluyver E.P."/>
            <person name="Wensvoort G."/>
            <person name="Moormann R.J.M."/>
        </authorList>
    </citation>
    <scope>NUCLEOTIDE SEQUENCE [GENOMIC RNA]</scope>
</reference>
<reference key="2">
    <citation type="journal article" date="1993" name="Virology">
        <title>Molecular characterization of porcine reproductive and respiratory syndrome virus, a member of the arterivirus group.</title>
        <authorList>
            <person name="Conzelmann K.K."/>
            <person name="Visser N."/>
            <person name="van Woensel P."/>
            <person name="Thiel H.J."/>
        </authorList>
    </citation>
    <scope>NUCLEOTIDE SEQUENCE [GENOMIC RNA]</scope>
    <source>
        <strain>Isolate Boxmeer 10</strain>
    </source>
</reference>
<reference key="3">
    <citation type="journal article" date="2011" name="J. Gen. Virol.">
        <title>Discovery of a small arterivirus gene that overlaps the GP5 coding sequence and is important for virus production.</title>
        <authorList>
            <person name="Firth A.E."/>
            <person name="Zevenhoven-Dobbe J.C."/>
            <person name="Wills N.M."/>
            <person name="Go Y.Y."/>
            <person name="Balasuriya U.B."/>
            <person name="Atkins J.F."/>
            <person name="Snijder E.J."/>
            <person name="Posthuma C.C."/>
        </authorList>
    </citation>
    <scope>CHARACTERIZATION</scope>
</reference>
<comment type="function">
    <text evidence="1">Minor virion component that plays an essential role in virus infectivity.</text>
</comment>
<comment type="subunit">
    <text evidence="1">Interacts with proteins GP2B and GP4.</text>
</comment>
<comment type="subcellular location">
    <subcellularLocation>
        <location evidence="1">Virion</location>
    </subcellularLocation>
    <subcellularLocation>
        <location evidence="1">Host cell membrane</location>
    </subcellularLocation>
</comment>
<comment type="alternative products">
    <event type="alternative initiation"/>
    <isoform>
        <id>P0DJZ4-1</id>
        <name>ORF5a</name>
        <name>Protein ORF5a</name>
        <sequence type="displayed"/>
    </isoform>
    <isoform>
        <id>Q04569-1</id>
        <name>GP5</name>
        <name>Glycoprotein 5</name>
        <sequence type="external"/>
    </isoform>
</comment>
<comment type="similarity">
    <text evidence="3">Belongs to the arteriviridae ORF5a protein family.</text>
</comment>